<protein>
    <recommendedName>
        <fullName>Probable endonuclease LCL3</fullName>
        <ecNumber>3.1.-.-</ecNumber>
    </recommendedName>
</protein>
<proteinExistence type="inferred from homology"/>
<sequence>MTNRSQDKHILVNRDALIDGTIVSVLVTGSAITLYKGYTCYLKQLTNASQIPTKVFRRKWLYGKVTSVGDGDNFHFFHMPGGVLGGWGWIRAVPKLTKNEKKTASLSFHWGTNKLKQQNATYKNKRNLPTISVRACGIDAPECAHFGNPAQPYSEDALIWLRHRILGKKLWIKPLKTDQYGRCVASIRIWTWLGYSDICLEMIKEGLAVVYEGKTGAEFDGREGKYRRHEFIARAKKKGLWSQKRLQTPGEYKKRYQ</sequence>
<evidence type="ECO:0000250" key="1"/>
<evidence type="ECO:0000255" key="2"/>
<evidence type="ECO:0000255" key="3">
    <source>
        <dbReference type="PROSITE-ProRule" id="PRU00272"/>
    </source>
</evidence>
<evidence type="ECO:0000305" key="4"/>
<comment type="subcellular location">
    <subcellularLocation>
        <location>Mitochondrion</location>
    </subcellularLocation>
    <subcellularLocation>
        <location evidence="1">Membrane</location>
        <topology evidence="1">Single-pass membrane protein</topology>
    </subcellularLocation>
</comment>
<comment type="similarity">
    <text evidence="4">Belongs to the LCL3 family.</text>
</comment>
<reference key="1">
    <citation type="journal article" date="2004" name="Nature">
        <title>Genome evolution in yeasts.</title>
        <authorList>
            <person name="Dujon B."/>
            <person name="Sherman D."/>
            <person name="Fischer G."/>
            <person name="Durrens P."/>
            <person name="Casaregola S."/>
            <person name="Lafontaine I."/>
            <person name="de Montigny J."/>
            <person name="Marck C."/>
            <person name="Neuveglise C."/>
            <person name="Talla E."/>
            <person name="Goffard N."/>
            <person name="Frangeul L."/>
            <person name="Aigle M."/>
            <person name="Anthouard V."/>
            <person name="Babour A."/>
            <person name="Barbe V."/>
            <person name="Barnay S."/>
            <person name="Blanchin S."/>
            <person name="Beckerich J.-M."/>
            <person name="Beyne E."/>
            <person name="Bleykasten C."/>
            <person name="Boisrame A."/>
            <person name="Boyer J."/>
            <person name="Cattolico L."/>
            <person name="Confanioleri F."/>
            <person name="de Daruvar A."/>
            <person name="Despons L."/>
            <person name="Fabre E."/>
            <person name="Fairhead C."/>
            <person name="Ferry-Dumazet H."/>
            <person name="Groppi A."/>
            <person name="Hantraye F."/>
            <person name="Hennequin C."/>
            <person name="Jauniaux N."/>
            <person name="Joyet P."/>
            <person name="Kachouri R."/>
            <person name="Kerrest A."/>
            <person name="Koszul R."/>
            <person name="Lemaire M."/>
            <person name="Lesur I."/>
            <person name="Ma L."/>
            <person name="Muller H."/>
            <person name="Nicaud J.-M."/>
            <person name="Nikolski M."/>
            <person name="Oztas S."/>
            <person name="Ozier-Kalogeropoulos O."/>
            <person name="Pellenz S."/>
            <person name="Potier S."/>
            <person name="Richard G.-F."/>
            <person name="Straub M.-L."/>
            <person name="Suleau A."/>
            <person name="Swennen D."/>
            <person name="Tekaia F."/>
            <person name="Wesolowski-Louvel M."/>
            <person name="Westhof E."/>
            <person name="Wirth B."/>
            <person name="Zeniou-Meyer M."/>
            <person name="Zivanovic Y."/>
            <person name="Bolotin-Fukuhara M."/>
            <person name="Thierry A."/>
            <person name="Bouchier C."/>
            <person name="Caudron B."/>
            <person name="Scarpelli C."/>
            <person name="Gaillardin C."/>
            <person name="Weissenbach J."/>
            <person name="Wincker P."/>
            <person name="Souciet J.-L."/>
        </authorList>
    </citation>
    <scope>NUCLEOTIDE SEQUENCE [LARGE SCALE GENOMIC DNA]</scope>
    <source>
        <strain>ATCC 2001 / BCRC 20586 / JCM 3761 / NBRC 0622 / NRRL Y-65 / CBS 138</strain>
    </source>
</reference>
<keyword id="KW-0106">Calcium</keyword>
<keyword id="KW-0255">Endonuclease</keyword>
<keyword id="KW-0378">Hydrolase</keyword>
<keyword id="KW-0472">Membrane</keyword>
<keyword id="KW-0479">Metal-binding</keyword>
<keyword id="KW-0496">Mitochondrion</keyword>
<keyword id="KW-0540">Nuclease</keyword>
<keyword id="KW-1185">Reference proteome</keyword>
<keyword id="KW-0812">Transmembrane</keyword>
<keyword id="KW-1133">Transmembrane helix</keyword>
<feature type="chain" id="PRO_0000408653" description="Probable endonuclease LCL3">
    <location>
        <begin position="1"/>
        <end position="257"/>
    </location>
</feature>
<feature type="transmembrane region" description="Helical" evidence="2">
    <location>
        <begin position="17"/>
        <end position="34"/>
    </location>
</feature>
<feature type="domain" description="TNase-like" evidence="3">
    <location>
        <begin position="59"/>
        <end position="243"/>
    </location>
</feature>
<feature type="active site" evidence="3">
    <location>
        <position position="134"/>
    </location>
</feature>
<feature type="active site" evidence="3">
    <location>
        <position position="142"/>
    </location>
</feature>
<feature type="active site" evidence="3">
    <location>
        <position position="182"/>
    </location>
</feature>
<feature type="binding site" evidence="3">
    <location>
        <position position="139"/>
    </location>
    <ligand>
        <name>Ca(2+)</name>
        <dbReference type="ChEBI" id="CHEBI:29108"/>
    </ligand>
</feature>
<gene>
    <name type="primary">LCL3</name>
    <name type="ordered locus">CAGL0H03201g</name>
</gene>
<name>LCL3_CANGA</name>
<dbReference type="EC" id="3.1.-.-"/>
<dbReference type="EMBL" id="CR380954">
    <property type="protein sequence ID" value="CAG59865.1"/>
    <property type="molecule type" value="Genomic_DNA"/>
</dbReference>
<dbReference type="RefSeq" id="XP_446932.1">
    <property type="nucleotide sequence ID" value="XM_446932.1"/>
</dbReference>
<dbReference type="FunCoup" id="Q6FS62">
    <property type="interactions" value="22"/>
</dbReference>
<dbReference type="STRING" id="284593.Q6FS62"/>
<dbReference type="EnsemblFungi" id="CAGL0H03201g-T">
    <property type="protein sequence ID" value="CAGL0H03201g-T-p1"/>
    <property type="gene ID" value="CAGL0H03201g"/>
</dbReference>
<dbReference type="KEGG" id="cgr:2888817"/>
<dbReference type="CGD" id="CAL0131678">
    <property type="gene designation" value="CAGL0H03201g"/>
</dbReference>
<dbReference type="VEuPathDB" id="FungiDB:B1J91_H03201g"/>
<dbReference type="VEuPathDB" id="FungiDB:CAGL0H03201g"/>
<dbReference type="eggNOG" id="ENOG502S1U4">
    <property type="taxonomic scope" value="Eukaryota"/>
</dbReference>
<dbReference type="HOGENOM" id="CLU_046484_0_1_1"/>
<dbReference type="InParanoid" id="Q6FS62"/>
<dbReference type="OMA" id="IYHTPGG"/>
<dbReference type="Proteomes" id="UP000002428">
    <property type="component" value="Chromosome H"/>
</dbReference>
<dbReference type="GO" id="GO:0016020">
    <property type="term" value="C:membrane"/>
    <property type="evidence" value="ECO:0007669"/>
    <property type="project" value="UniProtKB-SubCell"/>
</dbReference>
<dbReference type="GO" id="GO:0005739">
    <property type="term" value="C:mitochondrion"/>
    <property type="evidence" value="ECO:0007669"/>
    <property type="project" value="UniProtKB-SubCell"/>
</dbReference>
<dbReference type="GO" id="GO:0004519">
    <property type="term" value="F:endonuclease activity"/>
    <property type="evidence" value="ECO:0007669"/>
    <property type="project" value="UniProtKB-KW"/>
</dbReference>
<dbReference type="GO" id="GO:0046872">
    <property type="term" value="F:metal ion binding"/>
    <property type="evidence" value="ECO:0007669"/>
    <property type="project" value="UniProtKB-KW"/>
</dbReference>
<dbReference type="Gene3D" id="2.40.50.90">
    <property type="match status" value="1"/>
</dbReference>
<dbReference type="InterPro" id="IPR035437">
    <property type="entry name" value="SNase_OB-fold_sf"/>
</dbReference>
<dbReference type="InterPro" id="IPR016071">
    <property type="entry name" value="Staphylococal_nuclease_OB-fold"/>
</dbReference>
<dbReference type="PANTHER" id="PTHR12302">
    <property type="entry name" value="EBNA2 BINDING PROTEIN P100"/>
    <property type="match status" value="1"/>
</dbReference>
<dbReference type="PANTHER" id="PTHR12302:SF3">
    <property type="entry name" value="SERINE_THREONINE-PROTEIN KINASE 31"/>
    <property type="match status" value="1"/>
</dbReference>
<dbReference type="Pfam" id="PF00565">
    <property type="entry name" value="SNase"/>
    <property type="match status" value="1"/>
</dbReference>
<dbReference type="SMART" id="SM00318">
    <property type="entry name" value="SNc"/>
    <property type="match status" value="1"/>
</dbReference>
<dbReference type="SUPFAM" id="SSF50199">
    <property type="entry name" value="Staphylococcal nuclease"/>
    <property type="match status" value="1"/>
</dbReference>
<dbReference type="PROSITE" id="PS50830">
    <property type="entry name" value="TNASE_3"/>
    <property type="match status" value="1"/>
</dbReference>
<organism>
    <name type="scientific">Candida glabrata (strain ATCC 2001 / BCRC 20586 / JCM 3761 / NBRC 0622 / NRRL Y-65 / CBS 138)</name>
    <name type="common">Yeast</name>
    <name type="synonym">Nakaseomyces glabratus</name>
    <dbReference type="NCBI Taxonomy" id="284593"/>
    <lineage>
        <taxon>Eukaryota</taxon>
        <taxon>Fungi</taxon>
        <taxon>Dikarya</taxon>
        <taxon>Ascomycota</taxon>
        <taxon>Saccharomycotina</taxon>
        <taxon>Saccharomycetes</taxon>
        <taxon>Saccharomycetales</taxon>
        <taxon>Saccharomycetaceae</taxon>
        <taxon>Nakaseomyces</taxon>
    </lineage>
</organism>
<accession>Q6FS62</accession>